<reference key="1">
    <citation type="journal article" date="2007" name="Science">
        <title>The Chlamydomonas genome reveals the evolution of key animal and plant functions.</title>
        <authorList>
            <person name="Merchant S.S."/>
            <person name="Prochnik S.E."/>
            <person name="Vallon O."/>
            <person name="Harris E.H."/>
            <person name="Karpowicz S.J."/>
            <person name="Witman G.B."/>
            <person name="Terry A."/>
            <person name="Salamov A."/>
            <person name="Fritz-Laylin L.K."/>
            <person name="Marechal-Drouard L."/>
            <person name="Marshall W.F."/>
            <person name="Qu L.H."/>
            <person name="Nelson D.R."/>
            <person name="Sanderfoot A.A."/>
            <person name="Spalding M.H."/>
            <person name="Kapitonov V.V."/>
            <person name="Ren Q."/>
            <person name="Ferris P."/>
            <person name="Lindquist E."/>
            <person name="Shapiro H."/>
            <person name="Lucas S.M."/>
            <person name="Grimwood J."/>
            <person name="Schmutz J."/>
            <person name="Cardol P."/>
            <person name="Cerutti H."/>
            <person name="Chanfreau G."/>
            <person name="Chen C.L."/>
            <person name="Cognat V."/>
            <person name="Croft M.T."/>
            <person name="Dent R."/>
            <person name="Dutcher S."/>
            <person name="Fernandez E."/>
            <person name="Fukuzawa H."/>
            <person name="Gonzalez-Ballester D."/>
            <person name="Gonzalez-Halphen D."/>
            <person name="Hallmann A."/>
            <person name="Hanikenne M."/>
            <person name="Hippler M."/>
            <person name="Inwood W."/>
            <person name="Jabbari K."/>
            <person name="Kalanon M."/>
            <person name="Kuras R."/>
            <person name="Lefebvre P.A."/>
            <person name="Lemaire S.D."/>
            <person name="Lobanov A.V."/>
            <person name="Lohr M."/>
            <person name="Manuell A."/>
            <person name="Meier I."/>
            <person name="Mets L."/>
            <person name="Mittag M."/>
            <person name="Mittelmeier T."/>
            <person name="Moroney J.V."/>
            <person name="Moseley J."/>
            <person name="Napoli C."/>
            <person name="Nedelcu A.M."/>
            <person name="Niyogi K."/>
            <person name="Novoselov S.V."/>
            <person name="Paulsen I.T."/>
            <person name="Pazour G.J."/>
            <person name="Purton S."/>
            <person name="Ral J.P."/>
            <person name="Riano-Pachon D.M."/>
            <person name="Riekhof W."/>
            <person name="Rymarquis L."/>
            <person name="Schroda M."/>
            <person name="Stern D."/>
            <person name="Umen J."/>
            <person name="Willows R."/>
            <person name="Wilson N."/>
            <person name="Zimmer S.L."/>
            <person name="Allmer J."/>
            <person name="Balk J."/>
            <person name="Bisova K."/>
            <person name="Chen C.J."/>
            <person name="Elias M."/>
            <person name="Gendler K."/>
            <person name="Hauser C."/>
            <person name="Lamb M.R."/>
            <person name="Ledford H."/>
            <person name="Long J.C."/>
            <person name="Minagawa J."/>
            <person name="Page M.D."/>
            <person name="Pan J."/>
            <person name="Pootakham W."/>
            <person name="Roje S."/>
            <person name="Rose A."/>
            <person name="Stahlberg E."/>
            <person name="Terauchi A.M."/>
            <person name="Yang P."/>
            <person name="Ball S."/>
            <person name="Bowler C."/>
            <person name="Dieckmann C.L."/>
            <person name="Gladyshev V.N."/>
            <person name="Green P."/>
            <person name="Jorgensen R."/>
            <person name="Mayfield S."/>
            <person name="Mueller-Roeber B."/>
            <person name="Rajamani S."/>
            <person name="Sayre R.T."/>
            <person name="Brokstein P."/>
            <person name="Dubchak I."/>
            <person name="Goodstein D."/>
            <person name="Hornick L."/>
            <person name="Huang Y.W."/>
            <person name="Jhaveri J."/>
            <person name="Luo Y."/>
            <person name="Martinez D."/>
            <person name="Ngau W.C."/>
            <person name="Otillar B."/>
            <person name="Poliakov A."/>
            <person name="Porter A."/>
            <person name="Szajkowski L."/>
            <person name="Werner G."/>
            <person name="Zhou K."/>
            <person name="Grigoriev I.V."/>
            <person name="Rokhsar D.S."/>
            <person name="Grossman A.R."/>
        </authorList>
    </citation>
    <scope>NUCLEOTIDE SEQUENCE [LARGE SCALE GENOMIC DNA]</scope>
    <source>
        <strain>CC-503</strain>
    </source>
</reference>
<reference key="2">
    <citation type="journal article" date="2007" name="J. Cell Biol.">
        <title>A conserved CaM- and radial spoke associated complex mediates regulation of flagellar dynein activity.</title>
        <authorList>
            <person name="Dymek E.E."/>
            <person name="Smith E.F."/>
        </authorList>
    </citation>
    <scope>FUNCTION</scope>
    <scope>IDENTIFICATION IN A COMPLEX CONTAINING CFAP61; CFAP91 AND CFAP251</scope>
    <scope>SUBCELLULAR LOCATION</scope>
    <scope>INTERACTION WITH CALMODULIN</scope>
</reference>
<name>CF251_CHLRE</name>
<sequence>MAEEQTALSLSWVFGASAHVKHGVVNLSDGYTDKICYLAANTAVIYDKRLRRQLFLQGHTSPITCIVTTEDRSHVVTADTGPEALLVVWNVRTGLPTRTVQQPHRHGVSTMDMSADGQWLATVSAADPESGEQEVSLWSMAALLTPPEAAPPGQGPLRPLVTTLVPAGDVQHSIRFSPNNPAELISNGRRRVYFWSWAPGSPRFQYYSPPLRSRDFKQSVGDFVSSVFVPGTTQALTATTDGDLVVWDEQGIAAQVGTSATDRRAIKLMRIHNCPITLLATVGDFIVSGGEDGYVRFFDPLLRIVAWFEDLAAGPVTSVAFSAVLPDRLAHADAADTLNRFMVPDFVVATRNSRIVSVQSASFEEYDADRRRGSSVLDSLLADVVDLAAHPTRAEFAVLGRDGGLQRWDSIAHCLLGGRAFERQVGACLTYSRDGSLLVVGFGSGHLHILNADDCSDLYVMRNTAAGLVRVAVSNTGKHIAAADENHQLLLYAYLPYKHTMRWEYVGRCRSHHGPIASVVFGESPSGQTRLLSVGGDGRVVEYDLAASSVAAGVQVASFYDFPPGGGAPTSLSFAPPLAYFQAFAADTHLLVSGADGTVASWDINTAPLERSATAAEGAGGEARWAAVLGDPDLLREMRDYFVYAQIKTQGEDALEPRDVPGTVPVDLVPDLMRSAGFYPSESDIDNLLHHVQYMAHSRNMESLEVVTLADLLCLYINHRPLFNVTHADIVAAFRELGGRGDPGSCVPKLSREQLLSLLQSTGEPMSGEELTAALAALTGAHTPEKSMPVSVAAEQFSADVLGFDTTEAGAEAAT</sequence>
<comment type="function">
    <text evidence="2">As component of a spoke-associated complex, regulates flagellar dynein activity by mediating regulatory signals between the radial spokes and dynein arms.</text>
</comment>
<comment type="subunit">
    <text evidence="2">Identified in a spoke-associated complex containing CFAP61, CFAP91 and CFAP251; the complex is associated with the radial spokes in the axoneme (PubMed:17967944). The complex associates with Calmodulin; the association is calcium sensitive (PubMed:17967944).</text>
</comment>
<comment type="subcellular location">
    <subcellularLocation>
        <location evidence="2">Cytoplasm</location>
        <location evidence="2">Cytoskeleton</location>
        <location evidence="2">Flagellum axoneme</location>
    </subcellularLocation>
</comment>
<accession>A8IRK7</accession>
<feature type="chain" id="PRO_0000439533" description="Cilia- and flagella-associated protein 251">
    <location>
        <begin position="1"/>
        <end position="815"/>
    </location>
</feature>
<feature type="repeat" description="WD 1" evidence="1">
    <location>
        <begin position="58"/>
        <end position="99"/>
    </location>
</feature>
<feature type="repeat" description="WD 2" evidence="1">
    <location>
        <begin position="103"/>
        <end position="148"/>
    </location>
</feature>
<feature type="repeat" description="WD 3" evidence="1">
    <location>
        <begin position="166"/>
        <end position="205"/>
    </location>
</feature>
<feature type="repeat" description="WD 4" evidence="1">
    <location>
        <begin position="218"/>
        <end position="257"/>
    </location>
</feature>
<feature type="repeat" description="WD 5" evidence="1">
    <location>
        <begin position="271"/>
        <end position="308"/>
    </location>
</feature>
<feature type="repeat" description="WD 6" evidence="1">
    <location>
        <begin position="379"/>
        <end position="418"/>
    </location>
</feature>
<feature type="repeat" description="WD 7" evidence="1">
    <location>
        <begin position="420"/>
        <end position="460"/>
    </location>
</feature>
<feature type="repeat" description="WD 8" evidence="1">
    <location>
        <begin position="463"/>
        <end position="502"/>
    </location>
</feature>
<feature type="repeat" description="WD 9" evidence="1">
    <location>
        <begin position="511"/>
        <end position="553"/>
    </location>
</feature>
<feature type="repeat" description="WD 10" evidence="1">
    <location>
        <begin position="573"/>
        <end position="612"/>
    </location>
</feature>
<proteinExistence type="evidence at protein level"/>
<keyword id="KW-0966">Cell projection</keyword>
<keyword id="KW-0969">Cilium</keyword>
<keyword id="KW-0963">Cytoplasm</keyword>
<keyword id="KW-0206">Cytoskeleton</keyword>
<keyword id="KW-0282">Flagellum</keyword>
<keyword id="KW-0677">Repeat</keyword>
<keyword id="KW-0853">WD repeat</keyword>
<organism>
    <name type="scientific">Chlamydomonas reinhardtii</name>
    <name type="common">Chlamydomonas smithii</name>
    <dbReference type="NCBI Taxonomy" id="3055"/>
    <lineage>
        <taxon>Eukaryota</taxon>
        <taxon>Viridiplantae</taxon>
        <taxon>Chlorophyta</taxon>
        <taxon>core chlorophytes</taxon>
        <taxon>Chlorophyceae</taxon>
        <taxon>CS clade</taxon>
        <taxon>Chlamydomonadales</taxon>
        <taxon>Chlamydomonadaceae</taxon>
        <taxon>Chlamydomonas</taxon>
    </lineage>
</organism>
<protein>
    <recommendedName>
        <fullName evidence="4">Cilia- and flagella-associated protein 251</fullName>
    </recommendedName>
    <alternativeName>
        <fullName evidence="4">Flagellar-associated protein 251</fullName>
    </alternativeName>
</protein>
<dbReference type="EMBL" id="DS496121">
    <property type="protein sequence ID" value="EDP04324.1"/>
    <property type="molecule type" value="Genomic_DNA"/>
</dbReference>
<dbReference type="RefSeq" id="XP_001691834.1">
    <property type="nucleotide sequence ID" value="XM_001691782.1"/>
</dbReference>
<dbReference type="SMR" id="A8IRK7"/>
<dbReference type="PaxDb" id="3055-EDP04324"/>
<dbReference type="eggNOG" id="ENOG502QQ05">
    <property type="taxonomic scope" value="Eukaryota"/>
</dbReference>
<dbReference type="HOGENOM" id="CLU_007087_1_0_1"/>
<dbReference type="GO" id="GO:0005930">
    <property type="term" value="C:axoneme"/>
    <property type="evidence" value="ECO:0000314"/>
    <property type="project" value="UniProtKB"/>
</dbReference>
<dbReference type="GO" id="GO:0031514">
    <property type="term" value="C:motile cilium"/>
    <property type="evidence" value="ECO:0000314"/>
    <property type="project" value="UniProtKB"/>
</dbReference>
<dbReference type="GO" id="GO:0003341">
    <property type="term" value="P:cilium movement"/>
    <property type="evidence" value="ECO:0000314"/>
    <property type="project" value="UniProtKB"/>
</dbReference>
<dbReference type="Gene3D" id="2.130.10.10">
    <property type="entry name" value="YVTN repeat-like/Quinoprotein amine dehydrogenase"/>
    <property type="match status" value="2"/>
</dbReference>
<dbReference type="InterPro" id="IPR015943">
    <property type="entry name" value="WD40/YVTN_repeat-like_dom_sf"/>
</dbReference>
<dbReference type="InterPro" id="IPR036322">
    <property type="entry name" value="WD40_repeat_dom_sf"/>
</dbReference>
<dbReference type="InterPro" id="IPR001680">
    <property type="entry name" value="WD40_rpt"/>
</dbReference>
<dbReference type="InterPro" id="IPR050630">
    <property type="entry name" value="WD_repeat_EMAP"/>
</dbReference>
<dbReference type="PANTHER" id="PTHR13720:SF13">
    <property type="entry name" value="CILIA- AND FLAGELLA-ASSOCIATED PROTEIN 251"/>
    <property type="match status" value="1"/>
</dbReference>
<dbReference type="PANTHER" id="PTHR13720">
    <property type="entry name" value="WD-40 REPEAT PROTEIN"/>
    <property type="match status" value="1"/>
</dbReference>
<dbReference type="SMART" id="SM00320">
    <property type="entry name" value="WD40"/>
    <property type="match status" value="9"/>
</dbReference>
<dbReference type="SUPFAM" id="SSF50978">
    <property type="entry name" value="WD40 repeat-like"/>
    <property type="match status" value="1"/>
</dbReference>
<gene>
    <name evidence="4" type="primary">CFAP251</name>
    <name evidence="3" type="synonym">FAP251</name>
    <name evidence="5" type="ORF">CHLREDRAFT_145396</name>
</gene>
<evidence type="ECO:0000255" key="1"/>
<evidence type="ECO:0000269" key="2">
    <source>
    </source>
</evidence>
<evidence type="ECO:0000303" key="3">
    <source>
    </source>
</evidence>
<evidence type="ECO:0000305" key="4"/>
<evidence type="ECO:0000312" key="5">
    <source>
        <dbReference type="EMBL" id="EDP04324.1"/>
    </source>
</evidence>